<feature type="initiator methionine" description="Removed" evidence="2">
    <location>
        <position position="1"/>
    </location>
</feature>
<feature type="chain" id="PRO_0000081630" description="MKI67 FHA domain-interacting nucleolar phosphoprotein">
    <location>
        <begin position="2"/>
        <end position="317"/>
    </location>
</feature>
<feature type="domain" description="RRM" evidence="3">
    <location>
        <begin position="47"/>
        <end position="125"/>
    </location>
</feature>
<feature type="region of interest" description="Disordered" evidence="4">
    <location>
        <begin position="203"/>
        <end position="317"/>
    </location>
</feature>
<feature type="compositionally biased region" description="Basic and acidic residues" evidence="4">
    <location>
        <begin position="213"/>
        <end position="233"/>
    </location>
</feature>
<feature type="compositionally biased region" description="Basic residues" evidence="4">
    <location>
        <begin position="238"/>
        <end position="248"/>
    </location>
</feature>
<feature type="compositionally biased region" description="Basic and acidic residues" evidence="4">
    <location>
        <begin position="265"/>
        <end position="284"/>
    </location>
</feature>
<feature type="compositionally biased region" description="Basic residues" evidence="4">
    <location>
        <begin position="308"/>
        <end position="317"/>
    </location>
</feature>
<feature type="modified residue" description="N-acetylalanine" evidence="2">
    <location>
        <position position="2"/>
    </location>
</feature>
<feature type="modified residue" description="Omega-N-methylarginine" evidence="2">
    <location>
        <position position="116"/>
    </location>
</feature>
<feature type="modified residue" description="Citrulline" evidence="6">
    <location>
        <position position="203"/>
    </location>
</feature>
<feature type="modified residue" description="Phosphoserine" evidence="2">
    <location>
        <position position="219"/>
    </location>
</feature>
<feature type="modified residue" description="Phosphoserine" evidence="2">
    <location>
        <position position="253"/>
    </location>
</feature>
<feature type="modified residue" description="Phosphothreonine" evidence="10">
    <location>
        <position position="257"/>
    </location>
</feature>
<feature type="modified residue" description="Phosphothreonine" evidence="10">
    <location>
        <position position="261"/>
    </location>
</feature>
<feature type="modified residue" description="Omega-N-methylated arginine" evidence="2">
    <location>
        <position position="267"/>
    </location>
</feature>
<feature type="modified residue" description="Omega-N-methylated arginine" evidence="2">
    <location>
        <position position="268"/>
    </location>
</feature>
<feature type="modified residue" description="Phosphoserine" evidence="9">
    <location>
        <position position="270"/>
    </location>
</feature>
<feature type="modified residue" description="Phosphothreonine" evidence="2">
    <location>
        <position position="301"/>
    </location>
</feature>
<feature type="cross-link" description="Glycyl lysine isopeptide (Lys-Gly) (interchain with G-Cter in SUMO2)" evidence="2">
    <location>
        <position position="40"/>
    </location>
</feature>
<feature type="cross-link" description="Glycyl lysine isopeptide (Lys-Gly) (interchain with G-Cter in SUMO2)" evidence="2">
    <location>
        <position position="181"/>
    </location>
</feature>
<feature type="cross-link" description="Glycyl lysine isopeptide (Lys-Gly) (interchain with G-Cter in SUMO2)" evidence="2">
    <location>
        <position position="194"/>
    </location>
</feature>
<feature type="cross-link" description="Glycyl lysine isopeptide (Lys-Gly) (interchain with G-Cter in SUMO1); alternate" evidence="2">
    <location>
        <position position="293"/>
    </location>
</feature>
<feature type="cross-link" description="Glycyl lysine isopeptide (Lys-Gly) (interchain with G-Cter in SUMO2); alternate" evidence="2">
    <location>
        <position position="293"/>
    </location>
</feature>
<feature type="splice variant" id="VSP_014634" description="In isoform 2." evidence="7">
    <location>
        <begin position="36"/>
        <end position="83"/>
    </location>
</feature>
<feature type="sequence conflict" description="In Ref. 3; BAC36999." evidence="8" ref="3">
    <original>E</original>
    <variation>G</variation>
    <location>
        <position position="18"/>
    </location>
</feature>
<name>MK67I_MOUSE</name>
<evidence type="ECO:0000250" key="1"/>
<evidence type="ECO:0000250" key="2">
    <source>
        <dbReference type="UniProtKB" id="Q9BYG3"/>
    </source>
</evidence>
<evidence type="ECO:0000255" key="3">
    <source>
        <dbReference type="PROSITE-ProRule" id="PRU00176"/>
    </source>
</evidence>
<evidence type="ECO:0000256" key="4">
    <source>
        <dbReference type="SAM" id="MobiDB-lite"/>
    </source>
</evidence>
<evidence type="ECO:0000269" key="5">
    <source>
    </source>
</evidence>
<evidence type="ECO:0000269" key="6">
    <source>
    </source>
</evidence>
<evidence type="ECO:0000303" key="7">
    <source>
    </source>
</evidence>
<evidence type="ECO:0000305" key="8"/>
<evidence type="ECO:0007744" key="9">
    <source>
    </source>
</evidence>
<evidence type="ECO:0007744" key="10">
    <source>
    </source>
</evidence>
<sequence length="317" mass="36265">MAGLAGPAKPSLALNPQEDSQFEKALTQIQGRTKKPQQKKKEKLNRGVVYLGHLPSTLSESHIYNYCAQFGDISRFRLSRSKRTGNSKGYAFVEFESEDVAKIVAETMDNYLFGERLLSCKFMPRKKVHKDLFSQRNALFHRPSFPAVKRYNRKRGHLQMLKMEYRFKKKEKLLRKKLAAKGIDYSFPSLVLPKPKNIAVAHRDSEGNQVLPDQKEGLSGEPRRKEKMMKEDISNNIPKKRKRSRRKKSSVDSQGPTPVCTPTFLERRKSQVMEVGGDKDDEIILKLPVPPVKEDTQKTPTSASPGGKRPRKRKSKQ</sequence>
<dbReference type="EMBL" id="AB056870">
    <property type="protein sequence ID" value="BAB61920.1"/>
    <property type="molecule type" value="mRNA"/>
</dbReference>
<dbReference type="EMBL" id="AY030275">
    <property type="protein sequence ID" value="AAK38160.1"/>
    <property type="molecule type" value="mRNA"/>
</dbReference>
<dbReference type="EMBL" id="AK019209">
    <property type="protein sequence ID" value="BAC25583.2"/>
    <property type="molecule type" value="mRNA"/>
</dbReference>
<dbReference type="EMBL" id="AK077770">
    <property type="protein sequence ID" value="BAC36999.1"/>
    <property type="molecule type" value="mRNA"/>
</dbReference>
<dbReference type="EMBL" id="BC058559">
    <property type="protein sequence ID" value="AAH58559.1"/>
    <property type="molecule type" value="mRNA"/>
</dbReference>
<dbReference type="CCDS" id="CCDS15222.1">
    <molecule id="Q91VE6-1"/>
</dbReference>
<dbReference type="RefSeq" id="NP_080748.3">
    <molecule id="Q91VE6-1"/>
    <property type="nucleotide sequence ID" value="NM_026472.4"/>
</dbReference>
<dbReference type="SMR" id="Q91VE6"/>
<dbReference type="BioGRID" id="212560">
    <property type="interactions" value="6"/>
</dbReference>
<dbReference type="CORUM" id="Q91VE6"/>
<dbReference type="FunCoup" id="Q91VE6">
    <property type="interactions" value="3570"/>
</dbReference>
<dbReference type="IntAct" id="Q91VE6">
    <property type="interactions" value="2"/>
</dbReference>
<dbReference type="STRING" id="10090.ENSMUSP00000027626"/>
<dbReference type="GlyGen" id="Q91VE6">
    <property type="glycosylation" value="2 sites, 1 O-linked glycan (1 site)"/>
</dbReference>
<dbReference type="iPTMnet" id="Q91VE6"/>
<dbReference type="PhosphoSitePlus" id="Q91VE6"/>
<dbReference type="jPOST" id="Q91VE6"/>
<dbReference type="PaxDb" id="10090-ENSMUSP00000027626"/>
<dbReference type="PeptideAtlas" id="Q91VE6"/>
<dbReference type="ProteomicsDB" id="295676">
    <molecule id="Q91VE6-1"/>
</dbReference>
<dbReference type="ProteomicsDB" id="295677">
    <molecule id="Q91VE6-2"/>
</dbReference>
<dbReference type="Pumba" id="Q91VE6"/>
<dbReference type="Antibodypedia" id="4205">
    <property type="antibodies" value="393 antibodies from 34 providers"/>
</dbReference>
<dbReference type="DNASU" id="67949"/>
<dbReference type="Ensembl" id="ENSMUST00000027626.13">
    <molecule id="Q91VE6-1"/>
    <property type="protein sequence ID" value="ENSMUSP00000027626.7"/>
    <property type="gene ID" value="ENSMUSG00000026377.13"/>
</dbReference>
<dbReference type="Ensembl" id="ENSMUST00000112688.10">
    <molecule id="Q91VE6-2"/>
    <property type="protein sequence ID" value="ENSMUSP00000108308.4"/>
    <property type="gene ID" value="ENSMUSG00000026377.13"/>
</dbReference>
<dbReference type="GeneID" id="67949"/>
<dbReference type="KEGG" id="mmu:67949"/>
<dbReference type="UCSC" id="uc007cic.2">
    <molecule id="Q91VE6-1"/>
    <property type="organism name" value="mouse"/>
</dbReference>
<dbReference type="UCSC" id="uc011wql.1">
    <molecule id="Q91VE6-2"/>
    <property type="organism name" value="mouse"/>
</dbReference>
<dbReference type="AGR" id="MGI:1915199"/>
<dbReference type="CTD" id="84365"/>
<dbReference type="MGI" id="MGI:1915199">
    <property type="gene designation" value="Nifk"/>
</dbReference>
<dbReference type="VEuPathDB" id="HostDB:ENSMUSG00000026377"/>
<dbReference type="eggNOG" id="KOG4208">
    <property type="taxonomic scope" value="Eukaryota"/>
</dbReference>
<dbReference type="GeneTree" id="ENSGT00390000011515"/>
<dbReference type="HOGENOM" id="CLU_025741_1_0_1"/>
<dbReference type="InParanoid" id="Q91VE6"/>
<dbReference type="OMA" id="FECKDVA"/>
<dbReference type="OrthoDB" id="21467at2759"/>
<dbReference type="PhylomeDB" id="Q91VE6"/>
<dbReference type="TreeFam" id="TF315137"/>
<dbReference type="BioGRID-ORCS" id="67949">
    <property type="hits" value="27 hits in 79 CRISPR screens"/>
</dbReference>
<dbReference type="ChiTaRS" id="Nifk">
    <property type="organism name" value="mouse"/>
</dbReference>
<dbReference type="PRO" id="PR:Q91VE6"/>
<dbReference type="Proteomes" id="UP000000589">
    <property type="component" value="Chromosome 1"/>
</dbReference>
<dbReference type="RNAct" id="Q91VE6">
    <property type="molecule type" value="protein"/>
</dbReference>
<dbReference type="Bgee" id="ENSMUSG00000026377">
    <property type="expression patterns" value="Expressed in primitive streak and 257 other cell types or tissues"/>
</dbReference>
<dbReference type="ExpressionAtlas" id="Q91VE6">
    <property type="expression patterns" value="baseline and differential"/>
</dbReference>
<dbReference type="GO" id="GO:0000794">
    <property type="term" value="C:condensed nuclear chromosome"/>
    <property type="evidence" value="ECO:0007669"/>
    <property type="project" value="Ensembl"/>
</dbReference>
<dbReference type="GO" id="GO:0005737">
    <property type="term" value="C:cytoplasm"/>
    <property type="evidence" value="ECO:0000266"/>
    <property type="project" value="MGI"/>
</dbReference>
<dbReference type="GO" id="GO:0005730">
    <property type="term" value="C:nucleolus"/>
    <property type="evidence" value="ECO:0000266"/>
    <property type="project" value="MGI"/>
</dbReference>
<dbReference type="GO" id="GO:0005654">
    <property type="term" value="C:nucleoplasm"/>
    <property type="evidence" value="ECO:0007669"/>
    <property type="project" value="Ensembl"/>
</dbReference>
<dbReference type="GO" id="GO:0003723">
    <property type="term" value="F:RNA binding"/>
    <property type="evidence" value="ECO:0000266"/>
    <property type="project" value="MGI"/>
</dbReference>
<dbReference type="CDD" id="cd12307">
    <property type="entry name" value="RRM_NIFK_like"/>
    <property type="match status" value="1"/>
</dbReference>
<dbReference type="Gene3D" id="3.30.70.330">
    <property type="match status" value="1"/>
</dbReference>
<dbReference type="InterPro" id="IPR021043">
    <property type="entry name" value="NIFK_FHA_Ki67-binding"/>
</dbReference>
<dbReference type="InterPro" id="IPR012677">
    <property type="entry name" value="Nucleotide-bd_a/b_plait_sf"/>
</dbReference>
<dbReference type="InterPro" id="IPR035979">
    <property type="entry name" value="RBD_domain_sf"/>
</dbReference>
<dbReference type="InterPro" id="IPR000504">
    <property type="entry name" value="RRM_dom"/>
</dbReference>
<dbReference type="PANTHER" id="PTHR46754">
    <property type="entry name" value="MKI67 FHA DOMAIN-INTERACTING NUCLEOLAR PHOSPHOPROTEIN"/>
    <property type="match status" value="1"/>
</dbReference>
<dbReference type="Pfam" id="PF12196">
    <property type="entry name" value="hNIFK_binding"/>
    <property type="match status" value="1"/>
</dbReference>
<dbReference type="Pfam" id="PF00076">
    <property type="entry name" value="RRM_1"/>
    <property type="match status" value="1"/>
</dbReference>
<dbReference type="SMART" id="SM00360">
    <property type="entry name" value="RRM"/>
    <property type="match status" value="1"/>
</dbReference>
<dbReference type="SUPFAM" id="SSF54928">
    <property type="entry name" value="RNA-binding domain, RBD"/>
    <property type="match status" value="1"/>
</dbReference>
<dbReference type="PROSITE" id="PS50102">
    <property type="entry name" value="RRM"/>
    <property type="match status" value="1"/>
</dbReference>
<gene>
    <name type="primary">Nifk</name>
    <name type="synonym">Mki67ip</name>
</gene>
<keyword id="KW-0007">Acetylation</keyword>
<keyword id="KW-0025">Alternative splicing</keyword>
<keyword id="KW-0158">Chromosome</keyword>
<keyword id="KW-0164">Citrullination</keyword>
<keyword id="KW-1017">Isopeptide bond</keyword>
<keyword id="KW-0488">Methylation</keyword>
<keyword id="KW-0539">Nucleus</keyword>
<keyword id="KW-0597">Phosphoprotein</keyword>
<keyword id="KW-1185">Reference proteome</keyword>
<keyword id="KW-0694">RNA-binding</keyword>
<keyword id="KW-0832">Ubl conjugation</keyword>
<organism>
    <name type="scientific">Mus musculus</name>
    <name type="common">Mouse</name>
    <dbReference type="NCBI Taxonomy" id="10090"/>
    <lineage>
        <taxon>Eukaryota</taxon>
        <taxon>Metazoa</taxon>
        <taxon>Chordata</taxon>
        <taxon>Craniata</taxon>
        <taxon>Vertebrata</taxon>
        <taxon>Euteleostomi</taxon>
        <taxon>Mammalia</taxon>
        <taxon>Eutheria</taxon>
        <taxon>Euarchontoglires</taxon>
        <taxon>Glires</taxon>
        <taxon>Rodentia</taxon>
        <taxon>Myomorpha</taxon>
        <taxon>Muroidea</taxon>
        <taxon>Muridae</taxon>
        <taxon>Murinae</taxon>
        <taxon>Mus</taxon>
        <taxon>Mus</taxon>
    </lineage>
</organism>
<accession>Q91VE6</accession>
<accession>Q8BMV9</accession>
<accession>Q8BVL4</accession>
<proteinExistence type="evidence at protein level"/>
<comment type="subunit">
    <text evidence="1">Binds to the FHA domain of MKI67; this interaction is enhanced in mitosis.</text>
</comment>
<comment type="subcellular location">
    <subcellularLocation>
        <location>Nucleus</location>
        <location>Nucleolus</location>
    </subcellularLocation>
    <subcellularLocation>
        <location evidence="1">Chromosome</location>
    </subcellularLocation>
    <text evidence="1">Localizes to mitotic chromosomes in conjunction with MKI67.</text>
</comment>
<comment type="alternative products">
    <event type="alternative splicing"/>
    <isoform>
        <id>Q91VE6-1</id>
        <name>1</name>
        <sequence type="displayed"/>
    </isoform>
    <isoform>
        <id>Q91VE6-2</id>
        <name>2</name>
        <sequence type="described" ref="VSP_014634"/>
    </isoform>
</comment>
<comment type="tissue specificity">
    <text evidence="5">Expressed in brain, heart, hind limb muscles, intestine, liver, skin and spleen.</text>
</comment>
<comment type="PTM">
    <text evidence="1">Phosphorylated.</text>
</comment>
<comment type="PTM">
    <text evidence="6">Citrullinated by PADI4.</text>
</comment>
<reference key="1">
    <citation type="journal article" date="2001" name="J. Biol. Chem.">
        <title>A novel nucleolar protein, NIFK, interacts with the forkhead associated domain of Ki-67 antigen in mitosis.</title>
        <authorList>
            <person name="Takagi M."/>
            <person name="Sueishi M."/>
            <person name="Saiwaki T."/>
            <person name="Kametaka A."/>
            <person name="Yoneda Y."/>
        </authorList>
    </citation>
    <scope>NUCLEOTIDE SEQUENCE [MRNA] (ISOFORM 1)</scope>
    <source>
        <tissue>Ascitic tumor</tissue>
    </source>
</reference>
<reference key="2">
    <citation type="journal article" date="2003" name="Cell Biol. Int.">
        <title>The nifk gene is widely expressed in mouse tissues and is up-regulated in denervated hind limb muscle.</title>
        <authorList>
            <person name="Magnusson C."/>
            <person name="Norrby M."/>
            <person name="Libelius R."/>
            <person name="Tagerud S."/>
        </authorList>
    </citation>
    <scope>NUCLEOTIDE SEQUENCE [MRNA] (ISOFORM 1)</scope>
    <scope>TISSUE SPECIFICITY</scope>
    <source>
        <strain>NMRI</strain>
        <tissue>Skeletal muscle</tissue>
    </source>
</reference>
<reference key="3">
    <citation type="journal article" date="2005" name="Science">
        <title>The transcriptional landscape of the mammalian genome.</title>
        <authorList>
            <person name="Carninci P."/>
            <person name="Kasukawa T."/>
            <person name="Katayama S."/>
            <person name="Gough J."/>
            <person name="Frith M.C."/>
            <person name="Maeda N."/>
            <person name="Oyama R."/>
            <person name="Ravasi T."/>
            <person name="Lenhard B."/>
            <person name="Wells C."/>
            <person name="Kodzius R."/>
            <person name="Shimokawa K."/>
            <person name="Bajic V.B."/>
            <person name="Brenner S.E."/>
            <person name="Batalov S."/>
            <person name="Forrest A.R."/>
            <person name="Zavolan M."/>
            <person name="Davis M.J."/>
            <person name="Wilming L.G."/>
            <person name="Aidinis V."/>
            <person name="Allen J.E."/>
            <person name="Ambesi-Impiombato A."/>
            <person name="Apweiler R."/>
            <person name="Aturaliya R.N."/>
            <person name="Bailey T.L."/>
            <person name="Bansal M."/>
            <person name="Baxter L."/>
            <person name="Beisel K.W."/>
            <person name="Bersano T."/>
            <person name="Bono H."/>
            <person name="Chalk A.M."/>
            <person name="Chiu K.P."/>
            <person name="Choudhary V."/>
            <person name="Christoffels A."/>
            <person name="Clutterbuck D.R."/>
            <person name="Crowe M.L."/>
            <person name="Dalla E."/>
            <person name="Dalrymple B.P."/>
            <person name="de Bono B."/>
            <person name="Della Gatta G."/>
            <person name="di Bernardo D."/>
            <person name="Down T."/>
            <person name="Engstrom P."/>
            <person name="Fagiolini M."/>
            <person name="Faulkner G."/>
            <person name="Fletcher C.F."/>
            <person name="Fukushima T."/>
            <person name="Furuno M."/>
            <person name="Futaki S."/>
            <person name="Gariboldi M."/>
            <person name="Georgii-Hemming P."/>
            <person name="Gingeras T.R."/>
            <person name="Gojobori T."/>
            <person name="Green R.E."/>
            <person name="Gustincich S."/>
            <person name="Harbers M."/>
            <person name="Hayashi Y."/>
            <person name="Hensch T.K."/>
            <person name="Hirokawa N."/>
            <person name="Hill D."/>
            <person name="Huminiecki L."/>
            <person name="Iacono M."/>
            <person name="Ikeo K."/>
            <person name="Iwama A."/>
            <person name="Ishikawa T."/>
            <person name="Jakt M."/>
            <person name="Kanapin A."/>
            <person name="Katoh M."/>
            <person name="Kawasawa Y."/>
            <person name="Kelso J."/>
            <person name="Kitamura H."/>
            <person name="Kitano H."/>
            <person name="Kollias G."/>
            <person name="Krishnan S.P."/>
            <person name="Kruger A."/>
            <person name="Kummerfeld S.K."/>
            <person name="Kurochkin I.V."/>
            <person name="Lareau L.F."/>
            <person name="Lazarevic D."/>
            <person name="Lipovich L."/>
            <person name="Liu J."/>
            <person name="Liuni S."/>
            <person name="McWilliam S."/>
            <person name="Madan Babu M."/>
            <person name="Madera M."/>
            <person name="Marchionni L."/>
            <person name="Matsuda H."/>
            <person name="Matsuzawa S."/>
            <person name="Miki H."/>
            <person name="Mignone F."/>
            <person name="Miyake S."/>
            <person name="Morris K."/>
            <person name="Mottagui-Tabar S."/>
            <person name="Mulder N."/>
            <person name="Nakano N."/>
            <person name="Nakauchi H."/>
            <person name="Ng P."/>
            <person name="Nilsson R."/>
            <person name="Nishiguchi S."/>
            <person name="Nishikawa S."/>
            <person name="Nori F."/>
            <person name="Ohara O."/>
            <person name="Okazaki Y."/>
            <person name="Orlando V."/>
            <person name="Pang K.C."/>
            <person name="Pavan W.J."/>
            <person name="Pavesi G."/>
            <person name="Pesole G."/>
            <person name="Petrovsky N."/>
            <person name="Piazza S."/>
            <person name="Reed J."/>
            <person name="Reid J.F."/>
            <person name="Ring B.Z."/>
            <person name="Ringwald M."/>
            <person name="Rost B."/>
            <person name="Ruan Y."/>
            <person name="Salzberg S.L."/>
            <person name="Sandelin A."/>
            <person name="Schneider C."/>
            <person name="Schoenbach C."/>
            <person name="Sekiguchi K."/>
            <person name="Semple C.A."/>
            <person name="Seno S."/>
            <person name="Sessa L."/>
            <person name="Sheng Y."/>
            <person name="Shibata Y."/>
            <person name="Shimada H."/>
            <person name="Shimada K."/>
            <person name="Silva D."/>
            <person name="Sinclair B."/>
            <person name="Sperling S."/>
            <person name="Stupka E."/>
            <person name="Sugiura K."/>
            <person name="Sultana R."/>
            <person name="Takenaka Y."/>
            <person name="Taki K."/>
            <person name="Tammoja K."/>
            <person name="Tan S.L."/>
            <person name="Tang S."/>
            <person name="Taylor M.S."/>
            <person name="Tegner J."/>
            <person name="Teichmann S.A."/>
            <person name="Ueda H.R."/>
            <person name="van Nimwegen E."/>
            <person name="Verardo R."/>
            <person name="Wei C.L."/>
            <person name="Yagi K."/>
            <person name="Yamanishi H."/>
            <person name="Zabarovsky E."/>
            <person name="Zhu S."/>
            <person name="Zimmer A."/>
            <person name="Hide W."/>
            <person name="Bult C."/>
            <person name="Grimmond S.M."/>
            <person name="Teasdale R.D."/>
            <person name="Liu E.T."/>
            <person name="Brusic V."/>
            <person name="Quackenbush J."/>
            <person name="Wahlestedt C."/>
            <person name="Mattick J.S."/>
            <person name="Hume D.A."/>
            <person name="Kai C."/>
            <person name="Sasaki D."/>
            <person name="Tomaru Y."/>
            <person name="Fukuda S."/>
            <person name="Kanamori-Katayama M."/>
            <person name="Suzuki M."/>
            <person name="Aoki J."/>
            <person name="Arakawa T."/>
            <person name="Iida J."/>
            <person name="Imamura K."/>
            <person name="Itoh M."/>
            <person name="Kato T."/>
            <person name="Kawaji H."/>
            <person name="Kawagashira N."/>
            <person name="Kawashima T."/>
            <person name="Kojima M."/>
            <person name="Kondo S."/>
            <person name="Konno H."/>
            <person name="Nakano K."/>
            <person name="Ninomiya N."/>
            <person name="Nishio T."/>
            <person name="Okada M."/>
            <person name="Plessy C."/>
            <person name="Shibata K."/>
            <person name="Shiraki T."/>
            <person name="Suzuki S."/>
            <person name="Tagami M."/>
            <person name="Waki K."/>
            <person name="Watahiki A."/>
            <person name="Okamura-Oho Y."/>
            <person name="Suzuki H."/>
            <person name="Kawai J."/>
            <person name="Hayashizaki Y."/>
        </authorList>
    </citation>
    <scope>NUCLEOTIDE SEQUENCE [LARGE SCALE MRNA] (ISOFORM 1)</scope>
    <scope>NUCLEOTIDE SEQUENCE [LARGE SCALE MRNA] OF 1-125 (ISOFORM 2)</scope>
    <source>
        <strain>C57BL/6J</strain>
        <tissue>Embryo</tissue>
        <tissue>Thymus</tissue>
    </source>
</reference>
<reference key="4">
    <citation type="journal article" date="2004" name="Genome Res.">
        <title>The status, quality, and expansion of the NIH full-length cDNA project: the Mammalian Gene Collection (MGC).</title>
        <authorList>
            <consortium name="The MGC Project Team"/>
        </authorList>
    </citation>
    <scope>NUCLEOTIDE SEQUENCE [LARGE SCALE MRNA] (ISOFORM 1)</scope>
    <source>
        <strain>C57BL/6J</strain>
        <tissue>Olfactory epithelium</tissue>
    </source>
</reference>
<reference key="5">
    <citation type="journal article" date="2007" name="Proc. Natl. Acad. Sci. U.S.A.">
        <title>Large-scale phosphorylation analysis of mouse liver.</title>
        <authorList>
            <person name="Villen J."/>
            <person name="Beausoleil S.A."/>
            <person name="Gerber S.A."/>
            <person name="Gygi S.P."/>
        </authorList>
    </citation>
    <scope>PHOSPHORYLATION [LARGE SCALE ANALYSIS] AT SER-270</scope>
    <scope>IDENTIFICATION BY MASS SPECTROMETRY [LARGE SCALE ANALYSIS]</scope>
    <source>
        <tissue>Liver</tissue>
    </source>
</reference>
<reference key="6">
    <citation type="journal article" date="2010" name="Cell">
        <title>A tissue-specific atlas of mouse protein phosphorylation and expression.</title>
        <authorList>
            <person name="Huttlin E.L."/>
            <person name="Jedrychowski M.P."/>
            <person name="Elias J.E."/>
            <person name="Goswami T."/>
            <person name="Rad R."/>
            <person name="Beausoleil S.A."/>
            <person name="Villen J."/>
            <person name="Haas W."/>
            <person name="Sowa M.E."/>
            <person name="Gygi S.P."/>
        </authorList>
    </citation>
    <scope>PHOSPHORYLATION [LARGE SCALE ANALYSIS] AT THR-257 AND THR-261</scope>
    <scope>IDENTIFICATION BY MASS SPECTROMETRY [LARGE SCALE ANALYSIS]</scope>
    <source>
        <tissue>Lung</tissue>
        <tissue>Spleen</tissue>
    </source>
</reference>
<reference key="7">
    <citation type="journal article" date="2014" name="Nature">
        <title>Citrullination regulates pluripotency and histone H1 binding to chromatin.</title>
        <authorList>
            <person name="Christophorou M.A."/>
            <person name="Castelo-Branco G."/>
            <person name="Halley-Stott R.P."/>
            <person name="Oliveira C.S."/>
            <person name="Loos R."/>
            <person name="Radzisheuskaya A."/>
            <person name="Mowen K.A."/>
            <person name="Bertone P."/>
            <person name="Silva J.C."/>
            <person name="Zernicka-Goetz M."/>
            <person name="Nielsen M.L."/>
            <person name="Gurdon J.B."/>
            <person name="Kouzarides T."/>
        </authorList>
    </citation>
    <scope>CITRULLINATION AT ARG-203</scope>
</reference>
<protein>
    <recommendedName>
        <fullName>MKI67 FHA domain-interacting nucleolar phosphoprotein</fullName>
    </recommendedName>
    <alternativeName>
        <fullName>Nucleolar protein interacting with the FHA domain of pKI-67</fullName>
        <shortName>mNIFK</shortName>
    </alternativeName>
</protein>